<keyword id="KW-0249">Electron transport</keyword>
<keyword id="KW-0472">Membrane</keyword>
<keyword id="KW-0496">Mitochondrion</keyword>
<keyword id="KW-0999">Mitochondrion inner membrane</keyword>
<keyword id="KW-1185">Reference proteome</keyword>
<keyword id="KW-0679">Respiratory chain</keyword>
<keyword id="KW-0812">Transmembrane</keyword>
<keyword id="KW-1133">Transmembrane helix</keyword>
<keyword id="KW-0813">Transport</keyword>
<sequence length="119" mass="14188">MIARRNPEPLRFLPDEARSLPPPKLTDPRLLYIGFLGYCSGLIDNLIRRRPIATAGLHRQLLYITAFFFAGYYLVKREDYLYAVRDREMFGYMKLHPEDFPEEDKKTYGEIFEKFHPIR</sequence>
<reference key="1">
    <citation type="journal article" date="2006" name="Gene">
        <title>Adaptive selection of mitochondrial complex I subunits during primate radiation.</title>
        <authorList>
            <person name="Mishmar D."/>
            <person name="Ruiz-Pesini E."/>
            <person name="Mondragon-Palomino M."/>
            <person name="Procaccio V."/>
            <person name="Gaut B."/>
            <person name="Wallace D.C."/>
        </authorList>
    </citation>
    <scope>NUCLEOTIDE SEQUENCE [MRNA]</scope>
</reference>
<accession>Q0MQF8</accession>
<comment type="function">
    <text evidence="1">Accessory subunit of the mitochondrial membrane respiratory chain NADH dehydrogenase (Complex I), that is believed not to be involved in catalysis but required for the complex assembly. Complex I functions in the transfer of electrons from NADH to the respiratory chain. The immediate electron acceptor for the enzyme is believed to be ubiquinone.</text>
</comment>
<comment type="subunit">
    <text evidence="1">Complex I is composed of 45 different subunits. Interacts with TMEM242 (By similarity).</text>
</comment>
<comment type="subcellular location">
    <subcellularLocation>
        <location evidence="1">Mitochondrion inner membrane</location>
        <topology evidence="2">Single-pass membrane protein</topology>
        <orientation evidence="1">Matrix side</orientation>
    </subcellularLocation>
</comment>
<comment type="similarity">
    <text evidence="3">Belongs to the complex I NDUFC2 subunit family.</text>
</comment>
<name>NDUC2_GORGO</name>
<organism>
    <name type="scientific">Gorilla gorilla gorilla</name>
    <name type="common">Western lowland gorilla</name>
    <dbReference type="NCBI Taxonomy" id="9595"/>
    <lineage>
        <taxon>Eukaryota</taxon>
        <taxon>Metazoa</taxon>
        <taxon>Chordata</taxon>
        <taxon>Craniata</taxon>
        <taxon>Vertebrata</taxon>
        <taxon>Euteleostomi</taxon>
        <taxon>Mammalia</taxon>
        <taxon>Eutheria</taxon>
        <taxon>Euarchontoglires</taxon>
        <taxon>Primates</taxon>
        <taxon>Haplorrhini</taxon>
        <taxon>Catarrhini</taxon>
        <taxon>Hominidae</taxon>
        <taxon>Gorilla</taxon>
    </lineage>
</organism>
<evidence type="ECO:0000250" key="1">
    <source>
        <dbReference type="UniProtKB" id="O95298"/>
    </source>
</evidence>
<evidence type="ECO:0000255" key="2"/>
<evidence type="ECO:0000305" key="3"/>
<proteinExistence type="inferred from homology"/>
<feature type="chain" id="PRO_0000251850" description="NADH dehydrogenase [ubiquinone] 1 subunit C2">
    <location>
        <begin position="1"/>
        <end position="119"/>
    </location>
</feature>
<feature type="transmembrane region" description="Helical" evidence="2">
    <location>
        <begin position="56"/>
        <end position="75"/>
    </location>
</feature>
<gene>
    <name evidence="1" type="primary">NDUFC2</name>
</gene>
<dbReference type="EMBL" id="DQ885676">
    <property type="protein sequence ID" value="ABH12185.1"/>
    <property type="molecule type" value="mRNA"/>
</dbReference>
<dbReference type="RefSeq" id="NP_001266623.1">
    <property type="nucleotide sequence ID" value="NM_001279694.1"/>
</dbReference>
<dbReference type="SMR" id="Q0MQF8"/>
<dbReference type="FunCoup" id="Q0MQF8">
    <property type="interactions" value="1475"/>
</dbReference>
<dbReference type="STRING" id="9593.ENSGGOP00000047197"/>
<dbReference type="Ensembl" id="ENSGGOT00000051336.1">
    <property type="protein sequence ID" value="ENSGGOP00000049658.1"/>
    <property type="gene ID" value="ENSGGOG00000041901.1"/>
</dbReference>
<dbReference type="GeneID" id="101142450"/>
<dbReference type="KEGG" id="ggo:101142450"/>
<dbReference type="CTD" id="4718"/>
<dbReference type="eggNOG" id="KOG4516">
    <property type="taxonomic scope" value="Eukaryota"/>
</dbReference>
<dbReference type="GeneTree" id="ENSGT00390000010352"/>
<dbReference type="HOGENOM" id="CLU_156652_0_0_1"/>
<dbReference type="InParanoid" id="Q0MQF8"/>
<dbReference type="OMA" id="WFIGYHI"/>
<dbReference type="OrthoDB" id="2157at9604"/>
<dbReference type="Proteomes" id="UP000001519">
    <property type="component" value="Chromosome 11"/>
</dbReference>
<dbReference type="Bgee" id="ENSGGOG00000041901">
    <property type="expression patterns" value="Expressed in testis and 5 other cell types or tissues"/>
</dbReference>
<dbReference type="GO" id="GO:0005743">
    <property type="term" value="C:mitochondrial inner membrane"/>
    <property type="evidence" value="ECO:0007669"/>
    <property type="project" value="UniProtKB-SubCell"/>
</dbReference>
<dbReference type="GO" id="GO:0045271">
    <property type="term" value="C:respiratory chain complex I"/>
    <property type="evidence" value="ECO:0000250"/>
    <property type="project" value="UniProtKB"/>
</dbReference>
<dbReference type="GO" id="GO:0006120">
    <property type="term" value="P:mitochondrial electron transport, NADH to ubiquinone"/>
    <property type="evidence" value="ECO:0007669"/>
    <property type="project" value="InterPro"/>
</dbReference>
<dbReference type="InterPro" id="IPR009423">
    <property type="entry name" value="NDUC2"/>
</dbReference>
<dbReference type="PANTHER" id="PTHR13099:SF0">
    <property type="entry name" value="NADH DEHYDROGENASE [UBIQUINONE] 1 SUBUNIT C2-RELATED"/>
    <property type="match status" value="1"/>
</dbReference>
<dbReference type="PANTHER" id="PTHR13099">
    <property type="entry name" value="NADH-UBIQUINONE OXIDOREDUCTASE SUBUNIT B14.5B"/>
    <property type="match status" value="1"/>
</dbReference>
<dbReference type="Pfam" id="PF06374">
    <property type="entry name" value="NDUF_C2"/>
    <property type="match status" value="1"/>
</dbReference>
<dbReference type="PIRSF" id="PIRSF017834">
    <property type="entry name" value="NADH-UbQ_OxRdtase_b14.5b"/>
    <property type="match status" value="1"/>
</dbReference>
<protein>
    <recommendedName>
        <fullName evidence="1">NADH dehydrogenase [ubiquinone] 1 subunit C2</fullName>
    </recommendedName>
    <alternativeName>
        <fullName>Complex I-B14.5b</fullName>
        <shortName>CI-B14.5b</shortName>
    </alternativeName>
    <alternativeName>
        <fullName>NADH-ubiquinone oxidoreductase subunit B14.5b</fullName>
    </alternativeName>
</protein>